<protein>
    <recommendedName>
        <fullName evidence="1">Histidine biosynthesis bifunctional protein HisB</fullName>
    </recommendedName>
    <domain>
        <recommendedName>
            <fullName evidence="1">Histidinol-phosphatase</fullName>
            <ecNumber evidence="1">3.1.3.15</ecNumber>
        </recommendedName>
    </domain>
    <domain>
        <recommendedName>
            <fullName evidence="1">Imidazoleglycerol-phosphate dehydratase</fullName>
            <shortName evidence="1">IGPD</shortName>
            <ecNumber evidence="1">4.2.1.19</ecNumber>
        </recommendedName>
    </domain>
</protein>
<accession>B8D8Q4</accession>
<keyword id="KW-0028">Amino-acid biosynthesis</keyword>
<keyword id="KW-0963">Cytoplasm</keyword>
<keyword id="KW-0368">Histidine biosynthesis</keyword>
<keyword id="KW-0378">Hydrolase</keyword>
<keyword id="KW-0456">Lyase</keyword>
<keyword id="KW-0460">Magnesium</keyword>
<keyword id="KW-0479">Metal-binding</keyword>
<keyword id="KW-0511">Multifunctional enzyme</keyword>
<keyword id="KW-0862">Zinc</keyword>
<feature type="chain" id="PRO_1000149080" description="Histidine biosynthesis bifunctional protein HisB">
    <location>
        <begin position="1"/>
        <end position="353"/>
    </location>
</feature>
<feature type="region of interest" description="Histidinol-phosphatase" evidence="1">
    <location>
        <begin position="1"/>
        <end position="164"/>
    </location>
</feature>
<feature type="region of interest" description="Imidazoleglycerol-phosphate dehydratase" evidence="1">
    <location>
        <begin position="165"/>
        <end position="353"/>
    </location>
</feature>
<feature type="active site" description="Nucleophile" evidence="1">
    <location>
        <position position="9"/>
    </location>
</feature>
<feature type="active site" description="Proton donor" evidence="1">
    <location>
        <position position="11"/>
    </location>
</feature>
<feature type="binding site" evidence="1">
    <location>
        <position position="9"/>
    </location>
    <ligand>
        <name>Mg(2+)</name>
        <dbReference type="ChEBI" id="CHEBI:18420"/>
    </ligand>
</feature>
<feature type="binding site" evidence="1">
    <location>
        <position position="11"/>
    </location>
    <ligand>
        <name>Mg(2+)</name>
        <dbReference type="ChEBI" id="CHEBI:18420"/>
    </ligand>
</feature>
<feature type="binding site" evidence="1">
    <location>
        <position position="93"/>
    </location>
    <ligand>
        <name>Zn(2+)</name>
        <dbReference type="ChEBI" id="CHEBI:29105"/>
    </ligand>
</feature>
<feature type="binding site" evidence="1">
    <location>
        <position position="95"/>
    </location>
    <ligand>
        <name>Zn(2+)</name>
        <dbReference type="ChEBI" id="CHEBI:29105"/>
    </ligand>
</feature>
<feature type="binding site" evidence="1">
    <location>
        <position position="101"/>
    </location>
    <ligand>
        <name>Zn(2+)</name>
        <dbReference type="ChEBI" id="CHEBI:29105"/>
    </ligand>
</feature>
<feature type="binding site" evidence="1">
    <location>
        <position position="103"/>
    </location>
    <ligand>
        <name>Zn(2+)</name>
        <dbReference type="ChEBI" id="CHEBI:29105"/>
    </ligand>
</feature>
<feature type="binding site" evidence="1">
    <location>
        <position position="128"/>
    </location>
    <ligand>
        <name>Mg(2+)</name>
        <dbReference type="ChEBI" id="CHEBI:18420"/>
    </ligand>
</feature>
<dbReference type="EC" id="3.1.3.15" evidence="1"/>
<dbReference type="EC" id="4.2.1.19" evidence="1"/>
<dbReference type="EMBL" id="CP001161">
    <property type="protein sequence ID" value="ACL30476.1"/>
    <property type="molecule type" value="Genomic_DNA"/>
</dbReference>
<dbReference type="RefSeq" id="WP_009874057.1">
    <property type="nucleotide sequence ID" value="NC_011833.1"/>
</dbReference>
<dbReference type="SMR" id="B8D8Q4"/>
<dbReference type="KEGG" id="bap:BUAP5A_100"/>
<dbReference type="HOGENOM" id="CLU_044308_0_0_6"/>
<dbReference type="OrthoDB" id="9790411at2"/>
<dbReference type="UniPathway" id="UPA00031">
    <property type="reaction ID" value="UER00011"/>
</dbReference>
<dbReference type="UniPathway" id="UPA00031">
    <property type="reaction ID" value="UER00013"/>
</dbReference>
<dbReference type="Proteomes" id="UP000006904">
    <property type="component" value="Chromosome"/>
</dbReference>
<dbReference type="GO" id="GO:0005737">
    <property type="term" value="C:cytoplasm"/>
    <property type="evidence" value="ECO:0007669"/>
    <property type="project" value="UniProtKB-SubCell"/>
</dbReference>
<dbReference type="GO" id="GO:0004401">
    <property type="term" value="F:histidinol-phosphatase activity"/>
    <property type="evidence" value="ECO:0007669"/>
    <property type="project" value="UniProtKB-UniRule"/>
</dbReference>
<dbReference type="GO" id="GO:0004424">
    <property type="term" value="F:imidazoleglycerol-phosphate dehydratase activity"/>
    <property type="evidence" value="ECO:0007669"/>
    <property type="project" value="UniProtKB-UniRule"/>
</dbReference>
<dbReference type="GO" id="GO:0046872">
    <property type="term" value="F:metal ion binding"/>
    <property type="evidence" value="ECO:0007669"/>
    <property type="project" value="UniProtKB-KW"/>
</dbReference>
<dbReference type="GO" id="GO:0000105">
    <property type="term" value="P:L-histidine biosynthetic process"/>
    <property type="evidence" value="ECO:0007669"/>
    <property type="project" value="UniProtKB-UniRule"/>
</dbReference>
<dbReference type="CDD" id="cd07914">
    <property type="entry name" value="IGPD"/>
    <property type="match status" value="1"/>
</dbReference>
<dbReference type="FunFam" id="3.30.230.40:FF:000001">
    <property type="entry name" value="Imidazoleglycerol-phosphate dehydratase HisB"/>
    <property type="match status" value="1"/>
</dbReference>
<dbReference type="FunFam" id="3.30.230.40:FF:000003">
    <property type="entry name" value="Imidazoleglycerol-phosphate dehydratase HisB"/>
    <property type="match status" value="1"/>
</dbReference>
<dbReference type="Gene3D" id="3.40.50.1000">
    <property type="entry name" value="HAD superfamily/HAD-like"/>
    <property type="match status" value="1"/>
</dbReference>
<dbReference type="Gene3D" id="3.30.230.40">
    <property type="entry name" value="Imidazole glycerol phosphate dehydratase, domain 1"/>
    <property type="match status" value="2"/>
</dbReference>
<dbReference type="HAMAP" id="MF_01022">
    <property type="entry name" value="Bifunc_HisB"/>
    <property type="match status" value="1"/>
</dbReference>
<dbReference type="HAMAP" id="MF_00076">
    <property type="entry name" value="HisB"/>
    <property type="match status" value="1"/>
</dbReference>
<dbReference type="InterPro" id="IPR036412">
    <property type="entry name" value="HAD-like_sf"/>
</dbReference>
<dbReference type="InterPro" id="IPR006549">
    <property type="entry name" value="HAD-SF_hydro_IIIA"/>
</dbReference>
<dbReference type="InterPro" id="IPR023214">
    <property type="entry name" value="HAD_sf"/>
</dbReference>
<dbReference type="InterPro" id="IPR020566">
    <property type="entry name" value="His_synth_bifunc_HisB"/>
</dbReference>
<dbReference type="InterPro" id="IPR005954">
    <property type="entry name" value="HisB_N"/>
</dbReference>
<dbReference type="InterPro" id="IPR006543">
    <property type="entry name" value="Histidinol-phos"/>
</dbReference>
<dbReference type="InterPro" id="IPR038494">
    <property type="entry name" value="IGPD_sf"/>
</dbReference>
<dbReference type="InterPro" id="IPR000807">
    <property type="entry name" value="ImidazoleglycerolP_deHydtase"/>
</dbReference>
<dbReference type="InterPro" id="IPR020565">
    <property type="entry name" value="ImidazoleglycerP_deHydtase_CS"/>
</dbReference>
<dbReference type="InterPro" id="IPR013954">
    <property type="entry name" value="PNK3P"/>
</dbReference>
<dbReference type="InterPro" id="IPR020568">
    <property type="entry name" value="Ribosomal_Su5_D2-typ_SF"/>
</dbReference>
<dbReference type="NCBIfam" id="TIGR01662">
    <property type="entry name" value="HAD-SF-IIIA"/>
    <property type="match status" value="1"/>
</dbReference>
<dbReference type="NCBIfam" id="TIGR01261">
    <property type="entry name" value="hisB_Nterm"/>
    <property type="match status" value="1"/>
</dbReference>
<dbReference type="NCBIfam" id="TIGR01656">
    <property type="entry name" value="Histidinol-ppas"/>
    <property type="match status" value="1"/>
</dbReference>
<dbReference type="NCBIfam" id="NF002111">
    <property type="entry name" value="PRK00951.2-1"/>
    <property type="match status" value="1"/>
</dbReference>
<dbReference type="NCBIfam" id="NF002114">
    <property type="entry name" value="PRK00951.2-4"/>
    <property type="match status" value="1"/>
</dbReference>
<dbReference type="NCBIfam" id="NF003937">
    <property type="entry name" value="PRK05446.1"/>
    <property type="match status" value="1"/>
</dbReference>
<dbReference type="PANTHER" id="PTHR23133:SF2">
    <property type="entry name" value="IMIDAZOLEGLYCEROL-PHOSPHATE DEHYDRATASE"/>
    <property type="match status" value="1"/>
</dbReference>
<dbReference type="PANTHER" id="PTHR23133">
    <property type="entry name" value="IMIDAZOLEGLYCEROL-PHOSPHATE DEHYDRATASE HIS7"/>
    <property type="match status" value="1"/>
</dbReference>
<dbReference type="Pfam" id="PF00475">
    <property type="entry name" value="IGPD"/>
    <property type="match status" value="1"/>
</dbReference>
<dbReference type="Pfam" id="PF08645">
    <property type="entry name" value="PNK3P"/>
    <property type="match status" value="1"/>
</dbReference>
<dbReference type="SUPFAM" id="SSF56784">
    <property type="entry name" value="HAD-like"/>
    <property type="match status" value="1"/>
</dbReference>
<dbReference type="SUPFAM" id="SSF54211">
    <property type="entry name" value="Ribosomal protein S5 domain 2-like"/>
    <property type="match status" value="2"/>
</dbReference>
<dbReference type="PROSITE" id="PS00954">
    <property type="entry name" value="IGP_DEHYDRATASE_1"/>
    <property type="match status" value="1"/>
</dbReference>
<dbReference type="PROSITE" id="PS00955">
    <property type="entry name" value="IGP_DEHYDRATASE_2"/>
    <property type="match status" value="1"/>
</dbReference>
<proteinExistence type="inferred from homology"/>
<reference key="1">
    <citation type="journal article" date="2009" name="Science">
        <title>The dynamics and time scale of ongoing genomic erosion in symbiotic bacteria.</title>
        <authorList>
            <person name="Moran N.A."/>
            <person name="McLaughlin H.J."/>
            <person name="Sorek R."/>
        </authorList>
    </citation>
    <scope>NUCLEOTIDE SEQUENCE [LARGE SCALE GENOMIC DNA]</scope>
    <source>
        <strain>5A</strain>
    </source>
</reference>
<evidence type="ECO:0000255" key="1">
    <source>
        <dbReference type="HAMAP-Rule" id="MF_01022"/>
    </source>
</evidence>
<name>HIS7_BUCA5</name>
<organism>
    <name type="scientific">Buchnera aphidicola subsp. Acyrthosiphon pisum (strain 5A)</name>
    <dbReference type="NCBI Taxonomy" id="563178"/>
    <lineage>
        <taxon>Bacteria</taxon>
        <taxon>Pseudomonadati</taxon>
        <taxon>Pseudomonadota</taxon>
        <taxon>Gammaproteobacteria</taxon>
        <taxon>Enterobacterales</taxon>
        <taxon>Erwiniaceae</taxon>
        <taxon>Buchnera</taxon>
    </lineage>
</organism>
<gene>
    <name evidence="1" type="primary">hisB</name>
    <name type="ordered locus">BUAP5A_100</name>
</gene>
<sequence length="353" mass="40836">MKNKILFIDRDGTLIDEPINTFQVDSINKLVFKKYVISSLRKLVELDYKLIMITNQDGLGTESFPLQDFSTAHLFMLSVFRSEGVIFDDILICPHFLDDDCVCRKPKIKMIEPWLDKIDLKKSYVIGDRDTDMQLSNNLKIKGIKYKEDICNWLHITKYIIKHNRYAEIIRRTKETKVSIKVWLDLEETSKIDTGVKFFDHMLEQLSVHSGICMNISVQGDLDIDDHHTIEDTGIVLGEALLQALGKKNGLSRFGFYLPMDESRSNCIMDISNRPYLNFKAKFNHKMAGDLSTNMVEHFFYSLCYSMKITLHLYAEGKNDHHCIESLFKVFGRTLRQAIKIEGNMLPTSKGIL</sequence>
<comment type="catalytic activity">
    <reaction evidence="1">
        <text>D-erythro-1-(imidazol-4-yl)glycerol 3-phosphate = 3-(imidazol-4-yl)-2-oxopropyl phosphate + H2O</text>
        <dbReference type="Rhea" id="RHEA:11040"/>
        <dbReference type="ChEBI" id="CHEBI:15377"/>
        <dbReference type="ChEBI" id="CHEBI:57766"/>
        <dbReference type="ChEBI" id="CHEBI:58278"/>
        <dbReference type="EC" id="4.2.1.19"/>
    </reaction>
</comment>
<comment type="catalytic activity">
    <reaction evidence="1">
        <text>L-histidinol phosphate + H2O = L-histidinol + phosphate</text>
        <dbReference type="Rhea" id="RHEA:14465"/>
        <dbReference type="ChEBI" id="CHEBI:15377"/>
        <dbReference type="ChEBI" id="CHEBI:43474"/>
        <dbReference type="ChEBI" id="CHEBI:57699"/>
        <dbReference type="ChEBI" id="CHEBI:57980"/>
        <dbReference type="EC" id="3.1.3.15"/>
    </reaction>
</comment>
<comment type="cofactor">
    <cofactor evidence="1">
        <name>Mg(2+)</name>
        <dbReference type="ChEBI" id="CHEBI:18420"/>
    </cofactor>
</comment>
<comment type="cofactor">
    <cofactor evidence="1">
        <name>Zn(2+)</name>
        <dbReference type="ChEBI" id="CHEBI:29105"/>
    </cofactor>
</comment>
<comment type="pathway">
    <text evidence="1">Amino-acid biosynthesis; L-histidine biosynthesis; L-histidine from 5-phospho-alpha-D-ribose 1-diphosphate: step 6/9.</text>
</comment>
<comment type="pathway">
    <text evidence="1">Amino-acid biosynthesis; L-histidine biosynthesis; L-histidine from 5-phospho-alpha-D-ribose 1-diphosphate: step 8/9.</text>
</comment>
<comment type="subcellular location">
    <subcellularLocation>
        <location evidence="1">Cytoplasm</location>
    </subcellularLocation>
</comment>
<comment type="similarity">
    <text evidence="1">In the N-terminal section; belongs to the histidinol-phosphatase family.</text>
</comment>
<comment type="similarity">
    <text evidence="1">In the C-terminal section; belongs to the imidazoleglycerol-phosphate dehydratase family.</text>
</comment>